<keyword id="KW-0539">Nucleus</keyword>
<keyword id="KW-1185">Reference proteome</keyword>
<keyword id="KW-0677">Repeat</keyword>
<keyword id="KW-0690">Ribosome biogenesis</keyword>
<keyword id="KW-0698">rRNA processing</keyword>
<keyword id="KW-0853">WD repeat</keyword>
<name>BOP1_BRUMA</name>
<accession>A8PWB6</accession>
<sequence>MIHKRMNSTELERTSKKIDDYDSSDEEDLRNTIGNIPISWYDDFSHVGYDKDGNQIESAKKNDDMEEFLDRMDDSNYWRRVYDRQSGGFVTLNDEEVKKLNALDASKYPLVGYNPYQPFLDIFSSQTEIHPISNRPDSKRSFIPSLDEKRLVGKMVHAIKMGWVRPSRPKQIEKRVYDLWADNPCSEKTKTELARIRMHFPAPKVPLPGHAESYNPPAEYLCDEEELKKWEETDPEDRRLDFIPKKYDCLRKVPAYDRFYNDRYQRCLDLYLAPRQRKMKLNIDHTELLPELPNLTDMRPFPTTQSFLMLGHSGQVRSLSFEPESTEIFASGGEDGTLRLWSICDGRCLKTTSLDGSITSVAYCPLAKWTLLAVTMESNKMILTNSYCGDRHRITTTTEYLSKLRCESSESDVLKWKYEGKGTLSVDLGYIARQVVWHHKGDYFATFANSKSPKLIYIHQLSKCKSQRPFSRLKGLMTVLSFHPSEPFLFVGTQRYIRIYDLAKCQLKKKIITGSQWMSCMHVDFRGDNVFVGGHDRVFSWIDLQLSSKPWKSVKHHTAAIRGVTQHARCPLIATVSDDSTAIVYYARISSDSLKENEFVPVRRLRTQTAQKNGLSILAAIFHPSQPWLITAHVDGSIALFT</sequence>
<dbReference type="EMBL" id="DS239410">
    <property type="protein sequence ID" value="EDP32545.1"/>
    <property type="molecule type" value="Genomic_DNA"/>
</dbReference>
<dbReference type="SMR" id="A8PWB6"/>
<dbReference type="FunCoup" id="A8PWB6">
    <property type="interactions" value="1776"/>
</dbReference>
<dbReference type="STRING" id="6279.A8PWB6"/>
<dbReference type="EnsemblMetazoa" id="Bm13748.1">
    <property type="protein sequence ID" value="Bm13748.1"/>
    <property type="gene ID" value="WBGene00234009"/>
</dbReference>
<dbReference type="GeneID" id="6102121"/>
<dbReference type="KEGG" id="bmy:BM_BM13748"/>
<dbReference type="CTD" id="6102121"/>
<dbReference type="WormBase" id="Bm13748">
    <property type="protein sequence ID" value="BM03556"/>
    <property type="gene ID" value="WBGene00234009"/>
</dbReference>
<dbReference type="HOGENOM" id="CLU_011390_2_0_1"/>
<dbReference type="InParanoid" id="A8PWB6"/>
<dbReference type="OrthoDB" id="5571054at2759"/>
<dbReference type="Proteomes" id="UP000006672">
    <property type="component" value="Unassembled WGS sequence"/>
</dbReference>
<dbReference type="GO" id="GO:0005654">
    <property type="term" value="C:nucleoplasm"/>
    <property type="evidence" value="ECO:0007669"/>
    <property type="project" value="UniProtKB-SubCell"/>
</dbReference>
<dbReference type="GO" id="GO:0070545">
    <property type="term" value="C:PeBoW complex"/>
    <property type="evidence" value="ECO:0007669"/>
    <property type="project" value="TreeGrafter"/>
</dbReference>
<dbReference type="GO" id="GO:0030687">
    <property type="term" value="C:preribosome, large subunit precursor"/>
    <property type="evidence" value="ECO:0007669"/>
    <property type="project" value="UniProtKB-UniRule"/>
</dbReference>
<dbReference type="GO" id="GO:0043021">
    <property type="term" value="F:ribonucleoprotein complex binding"/>
    <property type="evidence" value="ECO:0007669"/>
    <property type="project" value="UniProtKB-UniRule"/>
</dbReference>
<dbReference type="GO" id="GO:0000466">
    <property type="term" value="P:maturation of 5.8S rRNA from tricistronic rRNA transcript (SSU-rRNA, 5.8S rRNA, LSU-rRNA)"/>
    <property type="evidence" value="ECO:0007669"/>
    <property type="project" value="UniProtKB-UniRule"/>
</dbReference>
<dbReference type="GO" id="GO:0000463">
    <property type="term" value="P:maturation of LSU-rRNA from tricistronic rRNA transcript (SSU-rRNA, 5.8S rRNA, LSU-rRNA)"/>
    <property type="evidence" value="ECO:0007669"/>
    <property type="project" value="UniProtKB-UniRule"/>
</dbReference>
<dbReference type="Gene3D" id="2.130.10.10">
    <property type="entry name" value="YVTN repeat-like/Quinoprotein amine dehydrogenase"/>
    <property type="match status" value="1"/>
</dbReference>
<dbReference type="HAMAP" id="MF_03027">
    <property type="entry name" value="BOP1"/>
    <property type="match status" value="1"/>
</dbReference>
<dbReference type="InterPro" id="IPR028598">
    <property type="entry name" value="BOP1/Erb1"/>
</dbReference>
<dbReference type="InterPro" id="IPR012953">
    <property type="entry name" value="BOP1_N_dom"/>
</dbReference>
<dbReference type="InterPro" id="IPR015943">
    <property type="entry name" value="WD40/YVTN_repeat-like_dom_sf"/>
</dbReference>
<dbReference type="InterPro" id="IPR036322">
    <property type="entry name" value="WD40_repeat_dom_sf"/>
</dbReference>
<dbReference type="InterPro" id="IPR001680">
    <property type="entry name" value="WD40_rpt"/>
</dbReference>
<dbReference type="PANTHER" id="PTHR17605:SF0">
    <property type="entry name" value="RIBOSOME BIOGENESIS PROTEIN BOP1"/>
    <property type="match status" value="1"/>
</dbReference>
<dbReference type="PANTHER" id="PTHR17605">
    <property type="entry name" value="RIBOSOME BIOGENESIS PROTEIN BOP1 BLOCK OF PROLIFERATION 1 PROTEIN"/>
    <property type="match status" value="1"/>
</dbReference>
<dbReference type="Pfam" id="PF08145">
    <property type="entry name" value="BOP1NT"/>
    <property type="match status" value="1"/>
</dbReference>
<dbReference type="Pfam" id="PF00400">
    <property type="entry name" value="WD40"/>
    <property type="match status" value="2"/>
</dbReference>
<dbReference type="SMART" id="SM01035">
    <property type="entry name" value="BOP1NT"/>
    <property type="match status" value="1"/>
</dbReference>
<dbReference type="SMART" id="SM00320">
    <property type="entry name" value="WD40"/>
    <property type="match status" value="6"/>
</dbReference>
<dbReference type="SUPFAM" id="SSF50978">
    <property type="entry name" value="WD40 repeat-like"/>
    <property type="match status" value="1"/>
</dbReference>
<dbReference type="PROSITE" id="PS50082">
    <property type="entry name" value="WD_REPEATS_2"/>
    <property type="match status" value="1"/>
</dbReference>
<dbReference type="PROSITE" id="PS50294">
    <property type="entry name" value="WD_REPEATS_REGION"/>
    <property type="match status" value="1"/>
</dbReference>
<comment type="function">
    <text evidence="1">Required for maturation of ribosomal RNAs and formation of the large ribosomal subunit.</text>
</comment>
<comment type="subcellular location">
    <subcellularLocation>
        <location evidence="1">Nucleus</location>
        <location evidence="1">Nucleolus</location>
    </subcellularLocation>
    <subcellularLocation>
        <location evidence="1">Nucleus</location>
        <location evidence="1">Nucleoplasm</location>
    </subcellularLocation>
</comment>
<comment type="similarity">
    <text evidence="1">Belongs to the WD repeat BOP1/ERB1 family.</text>
</comment>
<proteinExistence type="inferred from homology"/>
<feature type="chain" id="PRO_0000370405" description="Ribosome biogenesis protein BOP1 homolog">
    <location>
        <begin position="1"/>
        <end position="642"/>
    </location>
</feature>
<feature type="repeat" description="WD 1">
    <location>
        <begin position="311"/>
        <end position="351"/>
    </location>
</feature>
<feature type="repeat" description="WD 2">
    <location>
        <begin position="353"/>
        <end position="393"/>
    </location>
</feature>
<feature type="repeat" description="WD 3">
    <location>
        <begin position="472"/>
        <end position="510"/>
    </location>
</feature>
<feature type="repeat" description="WD 4">
    <location>
        <begin position="513"/>
        <end position="552"/>
    </location>
</feature>
<feature type="repeat" description="WD 5">
    <location>
        <begin position="556"/>
        <end position="595"/>
    </location>
</feature>
<feature type="repeat" description="WD 6">
    <location>
        <begin position="612"/>
        <end position="642"/>
    </location>
</feature>
<feature type="region of interest" description="Disordered" evidence="2">
    <location>
        <begin position="1"/>
        <end position="28"/>
    </location>
</feature>
<feature type="compositionally biased region" description="Basic and acidic residues" evidence="2">
    <location>
        <begin position="10"/>
        <end position="20"/>
    </location>
</feature>
<evidence type="ECO:0000255" key="1">
    <source>
        <dbReference type="HAMAP-Rule" id="MF_03027"/>
    </source>
</evidence>
<evidence type="ECO:0000256" key="2">
    <source>
        <dbReference type="SAM" id="MobiDB-lite"/>
    </source>
</evidence>
<protein>
    <recommendedName>
        <fullName evidence="1">Ribosome biogenesis protein BOP1 homolog</fullName>
    </recommendedName>
</protein>
<organism>
    <name type="scientific">Brugia malayi</name>
    <name type="common">Filarial nematode worm</name>
    <dbReference type="NCBI Taxonomy" id="6279"/>
    <lineage>
        <taxon>Eukaryota</taxon>
        <taxon>Metazoa</taxon>
        <taxon>Ecdysozoa</taxon>
        <taxon>Nematoda</taxon>
        <taxon>Chromadorea</taxon>
        <taxon>Rhabditida</taxon>
        <taxon>Spirurina</taxon>
        <taxon>Spiruromorpha</taxon>
        <taxon>Filarioidea</taxon>
        <taxon>Onchocercidae</taxon>
        <taxon>Brugia</taxon>
    </lineage>
</organism>
<reference key="1">
    <citation type="journal article" date="2007" name="Science">
        <title>Draft genome of the filarial nematode parasite Brugia malayi.</title>
        <authorList>
            <person name="Ghedin E."/>
            <person name="Wang S."/>
            <person name="Spiro D."/>
            <person name="Caler E."/>
            <person name="Zhao Q."/>
            <person name="Crabtree J."/>
            <person name="Allen J.E."/>
            <person name="Delcher A.L."/>
            <person name="Guiliano D.B."/>
            <person name="Miranda-Saavedra D."/>
            <person name="Angiuoli S.V."/>
            <person name="Creasy T."/>
            <person name="Amedeo P."/>
            <person name="Haas B."/>
            <person name="El-Sayed N.M."/>
            <person name="Wortman J.R."/>
            <person name="Feldblyum T."/>
            <person name="Tallon L."/>
            <person name="Schatz M."/>
            <person name="Shumway M."/>
            <person name="Koo H."/>
            <person name="Salzberg S.L."/>
            <person name="Schobel S."/>
            <person name="Pertea M."/>
            <person name="Pop M."/>
            <person name="White O."/>
            <person name="Barton G.J."/>
            <person name="Carlow C.K.S."/>
            <person name="Crawford M.J."/>
            <person name="Daub J."/>
            <person name="Dimmic M.W."/>
            <person name="Estes C.F."/>
            <person name="Foster J.M."/>
            <person name="Ganatra M."/>
            <person name="Gregory W.F."/>
            <person name="Johnson N.M."/>
            <person name="Jin J."/>
            <person name="Komuniecki R."/>
            <person name="Korf I."/>
            <person name="Kumar S."/>
            <person name="Laney S."/>
            <person name="Li B.-W."/>
            <person name="Li W."/>
            <person name="Lindblom T.H."/>
            <person name="Lustigman S."/>
            <person name="Ma D."/>
            <person name="Maina C.V."/>
            <person name="Martin D.M."/>
            <person name="McCarter J.P."/>
            <person name="McReynolds L."/>
            <person name="Mitreva M."/>
            <person name="Nutman T.B."/>
            <person name="Parkinson J."/>
            <person name="Peregrin-Alvarez J.M."/>
            <person name="Poole C."/>
            <person name="Ren Q."/>
            <person name="Saunders L."/>
            <person name="Sluder A.E."/>
            <person name="Smith K."/>
            <person name="Stanke M."/>
            <person name="Unnasch T.R."/>
            <person name="Ware J."/>
            <person name="Wei A.D."/>
            <person name="Weil G."/>
            <person name="Williams D.J."/>
            <person name="Zhang Y."/>
            <person name="Williams S.A."/>
            <person name="Fraser-Liggett C."/>
            <person name="Slatko B."/>
            <person name="Blaxter M.L."/>
            <person name="Scott A.L."/>
        </authorList>
    </citation>
    <scope>NUCLEOTIDE SEQUENCE [LARGE SCALE GENOMIC DNA]</scope>
</reference>
<gene>
    <name type="ORF">Bm1_36175</name>
</gene>